<comment type="function">
    <text evidence="1">Produces ATP from ADP in the presence of a proton gradient across the membrane. The gamma chain is believed to be important in regulating ATPase activity and the flow of protons through the CF(0) complex.</text>
</comment>
<comment type="subunit">
    <text evidence="1">F-type ATPases have 2 components, CF(1) - the catalytic core - and CF(0) - the membrane proton channel. CF(1) has five subunits: alpha(3), beta(3), gamma(1), delta(1), epsilon(1). CF(0) has three main subunits: a, b and c.</text>
</comment>
<comment type="subcellular location">
    <subcellularLocation>
        <location evidence="1">Cell inner membrane</location>
        <topology evidence="1">Peripheral membrane protein</topology>
    </subcellularLocation>
</comment>
<comment type="similarity">
    <text evidence="1">Belongs to the ATPase gamma chain family.</text>
</comment>
<feature type="chain" id="PRO_1000053184" description="ATP synthase gamma chain">
    <location>
        <begin position="1"/>
        <end position="294"/>
    </location>
</feature>
<gene>
    <name evidence="1" type="primary">atpG</name>
    <name type="ordered locus">CJJ81176_0141</name>
</gene>
<accession>A1VXI9</accession>
<name>ATPG_CAMJJ</name>
<evidence type="ECO:0000255" key="1">
    <source>
        <dbReference type="HAMAP-Rule" id="MF_00815"/>
    </source>
</evidence>
<keyword id="KW-0066">ATP synthesis</keyword>
<keyword id="KW-0997">Cell inner membrane</keyword>
<keyword id="KW-1003">Cell membrane</keyword>
<keyword id="KW-0139">CF(1)</keyword>
<keyword id="KW-0375">Hydrogen ion transport</keyword>
<keyword id="KW-0406">Ion transport</keyword>
<keyword id="KW-0472">Membrane</keyword>
<keyword id="KW-0813">Transport</keyword>
<protein>
    <recommendedName>
        <fullName evidence="1">ATP synthase gamma chain</fullName>
    </recommendedName>
    <alternativeName>
        <fullName evidence="1">ATP synthase F1 sector gamma subunit</fullName>
    </alternativeName>
    <alternativeName>
        <fullName evidence="1">F-ATPase gamma subunit</fullName>
    </alternativeName>
</protein>
<dbReference type="EMBL" id="CP000538">
    <property type="protein sequence ID" value="EAQ71920.1"/>
    <property type="molecule type" value="Genomic_DNA"/>
</dbReference>
<dbReference type="RefSeq" id="WP_002868766.1">
    <property type="nucleotide sequence ID" value="NC_008787.1"/>
</dbReference>
<dbReference type="SMR" id="A1VXI9"/>
<dbReference type="KEGG" id="cjj:CJJ81176_0141"/>
<dbReference type="eggNOG" id="COG0224">
    <property type="taxonomic scope" value="Bacteria"/>
</dbReference>
<dbReference type="HOGENOM" id="CLU_050669_0_1_7"/>
<dbReference type="Proteomes" id="UP000000646">
    <property type="component" value="Chromosome"/>
</dbReference>
<dbReference type="GO" id="GO:0005886">
    <property type="term" value="C:plasma membrane"/>
    <property type="evidence" value="ECO:0007669"/>
    <property type="project" value="UniProtKB-SubCell"/>
</dbReference>
<dbReference type="GO" id="GO:0045259">
    <property type="term" value="C:proton-transporting ATP synthase complex"/>
    <property type="evidence" value="ECO:0007669"/>
    <property type="project" value="UniProtKB-KW"/>
</dbReference>
<dbReference type="GO" id="GO:0005524">
    <property type="term" value="F:ATP binding"/>
    <property type="evidence" value="ECO:0007669"/>
    <property type="project" value="UniProtKB-UniRule"/>
</dbReference>
<dbReference type="GO" id="GO:0046933">
    <property type="term" value="F:proton-transporting ATP synthase activity, rotational mechanism"/>
    <property type="evidence" value="ECO:0007669"/>
    <property type="project" value="UniProtKB-UniRule"/>
</dbReference>
<dbReference type="GO" id="GO:0042777">
    <property type="term" value="P:proton motive force-driven plasma membrane ATP synthesis"/>
    <property type="evidence" value="ECO:0007669"/>
    <property type="project" value="UniProtKB-UniRule"/>
</dbReference>
<dbReference type="CDD" id="cd12151">
    <property type="entry name" value="F1-ATPase_gamma"/>
    <property type="match status" value="1"/>
</dbReference>
<dbReference type="FunFam" id="3.40.1380.10:FF:000006">
    <property type="entry name" value="ATP synthase gamma chain"/>
    <property type="match status" value="1"/>
</dbReference>
<dbReference type="Gene3D" id="3.40.1380.10">
    <property type="match status" value="1"/>
</dbReference>
<dbReference type="Gene3D" id="1.10.287.80">
    <property type="entry name" value="ATP synthase, gamma subunit, helix hairpin domain"/>
    <property type="match status" value="1"/>
</dbReference>
<dbReference type="HAMAP" id="MF_00815">
    <property type="entry name" value="ATP_synth_gamma_bact"/>
    <property type="match status" value="1"/>
</dbReference>
<dbReference type="InterPro" id="IPR035968">
    <property type="entry name" value="ATP_synth_F1_ATPase_gsu"/>
</dbReference>
<dbReference type="InterPro" id="IPR000131">
    <property type="entry name" value="ATP_synth_F1_gsu"/>
</dbReference>
<dbReference type="NCBIfam" id="TIGR01146">
    <property type="entry name" value="ATPsyn_F1gamma"/>
    <property type="match status" value="1"/>
</dbReference>
<dbReference type="PANTHER" id="PTHR11693">
    <property type="entry name" value="ATP SYNTHASE GAMMA CHAIN"/>
    <property type="match status" value="1"/>
</dbReference>
<dbReference type="PANTHER" id="PTHR11693:SF22">
    <property type="entry name" value="ATP SYNTHASE SUBUNIT GAMMA, MITOCHONDRIAL"/>
    <property type="match status" value="1"/>
</dbReference>
<dbReference type="Pfam" id="PF00231">
    <property type="entry name" value="ATP-synt"/>
    <property type="match status" value="1"/>
</dbReference>
<dbReference type="PRINTS" id="PR00126">
    <property type="entry name" value="ATPASEGAMMA"/>
</dbReference>
<dbReference type="SUPFAM" id="SSF52943">
    <property type="entry name" value="ATP synthase (F1-ATPase), gamma subunit"/>
    <property type="match status" value="1"/>
</dbReference>
<reference key="1">
    <citation type="submission" date="2006-12" db="EMBL/GenBank/DDBJ databases">
        <authorList>
            <person name="Fouts D.E."/>
            <person name="Nelson K.E."/>
            <person name="Sebastian Y."/>
        </authorList>
    </citation>
    <scope>NUCLEOTIDE SEQUENCE [LARGE SCALE GENOMIC DNA]</scope>
    <source>
        <strain>81-176</strain>
    </source>
</reference>
<sequence>MSNLKEIKRKIKSVYNTQKTTNAMKLVSTAKLKKAEEAAKRSKIYAQKIDEILSEISVQINKIVHNEDDVRLFLFHKKEQIKTVDLIFITADKGLCGGFNIKTLKTVSEMLKEYEAKNINIRLRAIGKTGIEYFNFQKIELLEKYFHLSSSPDYEKACEVIHAAVDDFLNGNTDEVILVHNGYKNMITQELKINHLIPVEPKSIEQTHNSLLELEPEGTELLEDLIKTYFEYNMYYALIDSLAAEHSARMQAMDNATNNAKARVKQLNLAYNKARQESITTELIEIISGVESMK</sequence>
<proteinExistence type="inferred from homology"/>
<organism>
    <name type="scientific">Campylobacter jejuni subsp. jejuni serotype O:23/36 (strain 81-176)</name>
    <dbReference type="NCBI Taxonomy" id="354242"/>
    <lineage>
        <taxon>Bacteria</taxon>
        <taxon>Pseudomonadati</taxon>
        <taxon>Campylobacterota</taxon>
        <taxon>Epsilonproteobacteria</taxon>
        <taxon>Campylobacterales</taxon>
        <taxon>Campylobacteraceae</taxon>
        <taxon>Campylobacter</taxon>
    </lineage>
</organism>